<reference key="1">
    <citation type="journal article" date="2012" name="Science">
        <title>A Papaver somniferum 10-gene cluster for synthesis of the anticancer alkaloid noscapine.</title>
        <authorList>
            <person name="Winzer T."/>
            <person name="Gazda V."/>
            <person name="He Z."/>
            <person name="Kaminski F."/>
            <person name="Kern M."/>
            <person name="Larson T.R."/>
            <person name="Li Y."/>
            <person name="Meade F."/>
            <person name="Teodor R."/>
            <person name="Vaistij F.E."/>
            <person name="Walker C."/>
            <person name="Bowser T.A."/>
            <person name="Graham I.A."/>
        </authorList>
    </citation>
    <scope>NUCLEOTIDE SEQUENCE [GENOMIC DNA]</scope>
</reference>
<reference key="2">
    <citation type="journal article" date="2016" name="Nat. Commun.">
        <title>Engineering biosynthesis of the anticancer alkaloid noscapine in yeast.</title>
        <authorList>
            <person name="Li Y."/>
            <person name="Smolke C.D."/>
        </authorList>
    </citation>
    <scope>FUNCTION</scope>
    <scope>CATALYTIC ACTIVITY</scope>
</reference>
<reference key="3">
    <citation type="journal article" date="2018" name="Proc. Natl. Acad. Sci. U.S.A.">
        <title>Complete biosynthesis of noscapine and halogenated alkaloids in yeast.</title>
        <authorList>
            <person name="Li Y."/>
            <person name="Li S."/>
            <person name="Thodey K."/>
            <person name="Trenchard I."/>
            <person name="Cravens A."/>
            <person name="Smolke C.D."/>
        </authorList>
    </citation>
    <scope>FUNCTION</scope>
</reference>
<feature type="chain" id="PRO_0000447601" description="Noscapine synthase SDR1">
    <location>
        <begin position="1"/>
        <end position="348"/>
    </location>
</feature>
<dbReference type="EC" id="1.1.1.415" evidence="1"/>
<dbReference type="EMBL" id="JQ659007">
    <property type="protein sequence ID" value="AFB74619.1"/>
    <property type="molecule type" value="Genomic_DNA"/>
</dbReference>
<dbReference type="SMR" id="I3PLR3"/>
<dbReference type="KEGG" id="ag:AFB74619"/>
<dbReference type="BioCyc" id="MetaCyc:MONOMER-17772"/>
<dbReference type="BRENDA" id="1.1.1.415">
    <property type="organism ID" value="4515"/>
</dbReference>
<dbReference type="GO" id="GO:0016616">
    <property type="term" value="F:oxidoreductase activity, acting on the CH-OH group of donors, NAD or NADP as acceptor"/>
    <property type="evidence" value="ECO:0007669"/>
    <property type="project" value="TreeGrafter"/>
</dbReference>
<dbReference type="GO" id="GO:0009820">
    <property type="term" value="P:alkaloid metabolic process"/>
    <property type="evidence" value="ECO:0007669"/>
    <property type="project" value="UniProtKB-KW"/>
</dbReference>
<dbReference type="CDD" id="cd08958">
    <property type="entry name" value="FR_SDR_e"/>
    <property type="match status" value="1"/>
</dbReference>
<dbReference type="FunFam" id="3.40.50.720:FF:000085">
    <property type="entry name" value="Dihydroflavonol reductase"/>
    <property type="match status" value="1"/>
</dbReference>
<dbReference type="Gene3D" id="3.40.50.720">
    <property type="entry name" value="NAD(P)-binding Rossmann-like Domain"/>
    <property type="match status" value="1"/>
</dbReference>
<dbReference type="InterPro" id="IPR001509">
    <property type="entry name" value="Epimerase_deHydtase"/>
</dbReference>
<dbReference type="InterPro" id="IPR036291">
    <property type="entry name" value="NAD(P)-bd_dom_sf"/>
</dbReference>
<dbReference type="InterPro" id="IPR050425">
    <property type="entry name" value="NAD(P)_dehydrat-like"/>
</dbReference>
<dbReference type="PANTHER" id="PTHR10366:SF563">
    <property type="entry name" value="CINNAMOYL-COA REDUCTASE 16"/>
    <property type="match status" value="1"/>
</dbReference>
<dbReference type="PANTHER" id="PTHR10366">
    <property type="entry name" value="NAD DEPENDENT EPIMERASE/DEHYDRATASE"/>
    <property type="match status" value="1"/>
</dbReference>
<dbReference type="Pfam" id="PF01370">
    <property type="entry name" value="Epimerase"/>
    <property type="match status" value="1"/>
</dbReference>
<dbReference type="SUPFAM" id="SSF51735">
    <property type="entry name" value="NAD(P)-binding Rossmann-fold domains"/>
    <property type="match status" value="1"/>
</dbReference>
<sequence length="348" mass="38815">MHGQKNISERYQKFKEMEGTGKIVCVTGGAGYLASWLIMRLLERGYSVRTTVRSDPKFREDVSHLKALPEATEKLQIFEADLENPESFDDAINGCVGVFLVAQGMNFAEEYTLEKIIKTCVEGTLRILQSCLKSKTVKKVVYTSSADAAMMISNLKAVKEIDETIWSEVDNFISKPEQVIPGLPSYVVSKVLTERACLKFSEEHGLDVVTILPPLVVGPFITPHPPPSVSIALSIISGDVSMMLGVRLENAVHIDDVALAHIFVFECEKAKGRHICSSVDFPMHDLPKFISENYPEFNVPTDLLKDIEEQEPVHLSSDKLLSMGFQFKYDFAEIFGDAIRCAKEKGFL</sequence>
<organism>
    <name type="scientific">Papaver somniferum</name>
    <name type="common">Opium poppy</name>
    <dbReference type="NCBI Taxonomy" id="3469"/>
    <lineage>
        <taxon>Eukaryota</taxon>
        <taxon>Viridiplantae</taxon>
        <taxon>Streptophyta</taxon>
        <taxon>Embryophyta</taxon>
        <taxon>Tracheophyta</taxon>
        <taxon>Spermatophyta</taxon>
        <taxon>Magnoliopsida</taxon>
        <taxon>Ranunculales</taxon>
        <taxon>Papaveraceae</taxon>
        <taxon>Papaveroideae</taxon>
        <taxon>Papaver</taxon>
    </lineage>
</organism>
<keyword id="KW-0017">Alkaloid metabolism</keyword>
<keyword id="KW-0520">NAD</keyword>
<keyword id="KW-0560">Oxidoreductase</keyword>
<comment type="function">
    <text evidence="1 2">Oxidoreductase that catalyzes the last step in the biosynthesis of the benzylisoquinoline alkaloid noscapine (PubMed:27378283, PubMed:29610307). Converts narcotine hemiacetal to noscapine (PubMed:27378283).</text>
</comment>
<comment type="catalytic activity">
    <reaction evidence="1">
        <text>narcotine hemiacetal + NAD(+) = noscapine + NADH + H(+)</text>
        <dbReference type="Rhea" id="RHEA:57404"/>
        <dbReference type="ChEBI" id="CHEBI:15378"/>
        <dbReference type="ChEBI" id="CHEBI:57540"/>
        <dbReference type="ChEBI" id="CHEBI:57945"/>
        <dbReference type="ChEBI" id="CHEBI:73237"/>
        <dbReference type="ChEBI" id="CHEBI:141667"/>
        <dbReference type="EC" id="1.1.1.415"/>
    </reaction>
    <physiologicalReaction direction="left-to-right" evidence="5">
        <dbReference type="Rhea" id="RHEA:57405"/>
    </physiologicalReaction>
</comment>
<comment type="pathway">
    <text evidence="4">Alkaloid biosynthesis.</text>
</comment>
<comment type="similarity">
    <text evidence="4">Belongs to the NAD(P)-dependent epimerase/dehydratase family.</text>
</comment>
<name>SDR1_PAPSO</name>
<gene>
    <name evidence="3" type="primary">SDR1</name>
</gene>
<proteinExistence type="evidence at protein level"/>
<accession>I3PLR3</accession>
<protein>
    <recommendedName>
        <fullName evidence="4">Noscapine synthase SDR1</fullName>
        <ecNumber evidence="1">1.1.1.415</ecNumber>
    </recommendedName>
    <alternativeName>
        <fullName evidence="3">Short-chain dehydrogenase/reductase 1</fullName>
        <shortName evidence="3">PsSDR1</shortName>
    </alternativeName>
</protein>
<evidence type="ECO:0000269" key="1">
    <source>
    </source>
</evidence>
<evidence type="ECO:0000269" key="2">
    <source>
    </source>
</evidence>
<evidence type="ECO:0000303" key="3">
    <source>
    </source>
</evidence>
<evidence type="ECO:0000305" key="4"/>
<evidence type="ECO:0000305" key="5">
    <source>
    </source>
</evidence>